<feature type="chain" id="PRO_0000293295" description="Small ribosomal subunit protein uS4">
    <location>
        <begin position="1"/>
        <end position="201"/>
    </location>
</feature>
<feature type="domain" description="S4 RNA-binding" evidence="1">
    <location>
        <begin position="93"/>
        <end position="153"/>
    </location>
</feature>
<feature type="region of interest" description="Disordered" evidence="2">
    <location>
        <begin position="21"/>
        <end position="43"/>
    </location>
</feature>
<proteinExistence type="inferred from homology"/>
<accession>Q03R08</accession>
<dbReference type="EMBL" id="CP000416">
    <property type="protein sequence ID" value="ABJ64364.1"/>
    <property type="molecule type" value="Genomic_DNA"/>
</dbReference>
<dbReference type="RefSeq" id="WP_011668128.1">
    <property type="nucleotide sequence ID" value="NC_008497.1"/>
</dbReference>
<dbReference type="SMR" id="Q03R08"/>
<dbReference type="STRING" id="387344.LVIS_1259"/>
<dbReference type="KEGG" id="lbr:LVIS_1259"/>
<dbReference type="PATRIC" id="fig|387344.15.peg.1199"/>
<dbReference type="eggNOG" id="COG0522">
    <property type="taxonomic scope" value="Bacteria"/>
</dbReference>
<dbReference type="HOGENOM" id="CLU_092403_0_1_9"/>
<dbReference type="Proteomes" id="UP000001652">
    <property type="component" value="Chromosome"/>
</dbReference>
<dbReference type="GO" id="GO:0015935">
    <property type="term" value="C:small ribosomal subunit"/>
    <property type="evidence" value="ECO:0007669"/>
    <property type="project" value="InterPro"/>
</dbReference>
<dbReference type="GO" id="GO:0019843">
    <property type="term" value="F:rRNA binding"/>
    <property type="evidence" value="ECO:0007669"/>
    <property type="project" value="UniProtKB-UniRule"/>
</dbReference>
<dbReference type="GO" id="GO:0003735">
    <property type="term" value="F:structural constituent of ribosome"/>
    <property type="evidence" value="ECO:0007669"/>
    <property type="project" value="InterPro"/>
</dbReference>
<dbReference type="GO" id="GO:0042274">
    <property type="term" value="P:ribosomal small subunit biogenesis"/>
    <property type="evidence" value="ECO:0007669"/>
    <property type="project" value="TreeGrafter"/>
</dbReference>
<dbReference type="GO" id="GO:0006412">
    <property type="term" value="P:translation"/>
    <property type="evidence" value="ECO:0007669"/>
    <property type="project" value="UniProtKB-UniRule"/>
</dbReference>
<dbReference type="CDD" id="cd00165">
    <property type="entry name" value="S4"/>
    <property type="match status" value="1"/>
</dbReference>
<dbReference type="FunFam" id="1.10.1050.10:FF:000001">
    <property type="entry name" value="30S ribosomal protein S4"/>
    <property type="match status" value="1"/>
</dbReference>
<dbReference type="FunFam" id="3.10.290.10:FF:000001">
    <property type="entry name" value="30S ribosomal protein S4"/>
    <property type="match status" value="1"/>
</dbReference>
<dbReference type="Gene3D" id="1.10.1050.10">
    <property type="entry name" value="Ribosomal Protein S4 Delta 41, Chain A, domain 1"/>
    <property type="match status" value="1"/>
</dbReference>
<dbReference type="Gene3D" id="3.10.290.10">
    <property type="entry name" value="RNA-binding S4 domain"/>
    <property type="match status" value="1"/>
</dbReference>
<dbReference type="HAMAP" id="MF_01306_B">
    <property type="entry name" value="Ribosomal_uS4_B"/>
    <property type="match status" value="1"/>
</dbReference>
<dbReference type="InterPro" id="IPR022801">
    <property type="entry name" value="Ribosomal_uS4"/>
</dbReference>
<dbReference type="InterPro" id="IPR005709">
    <property type="entry name" value="Ribosomal_uS4_bac-type"/>
</dbReference>
<dbReference type="InterPro" id="IPR018079">
    <property type="entry name" value="Ribosomal_uS4_CS"/>
</dbReference>
<dbReference type="InterPro" id="IPR001912">
    <property type="entry name" value="Ribosomal_uS4_N"/>
</dbReference>
<dbReference type="InterPro" id="IPR002942">
    <property type="entry name" value="S4_RNA-bd"/>
</dbReference>
<dbReference type="InterPro" id="IPR036986">
    <property type="entry name" value="S4_RNA-bd_sf"/>
</dbReference>
<dbReference type="NCBIfam" id="NF003717">
    <property type="entry name" value="PRK05327.1"/>
    <property type="match status" value="1"/>
</dbReference>
<dbReference type="NCBIfam" id="TIGR01017">
    <property type="entry name" value="rpsD_bact"/>
    <property type="match status" value="1"/>
</dbReference>
<dbReference type="PANTHER" id="PTHR11831">
    <property type="entry name" value="30S 40S RIBOSOMAL PROTEIN"/>
    <property type="match status" value="1"/>
</dbReference>
<dbReference type="PANTHER" id="PTHR11831:SF4">
    <property type="entry name" value="SMALL RIBOSOMAL SUBUNIT PROTEIN US4M"/>
    <property type="match status" value="1"/>
</dbReference>
<dbReference type="Pfam" id="PF00163">
    <property type="entry name" value="Ribosomal_S4"/>
    <property type="match status" value="1"/>
</dbReference>
<dbReference type="Pfam" id="PF01479">
    <property type="entry name" value="S4"/>
    <property type="match status" value="1"/>
</dbReference>
<dbReference type="SMART" id="SM01390">
    <property type="entry name" value="Ribosomal_S4"/>
    <property type="match status" value="1"/>
</dbReference>
<dbReference type="SMART" id="SM00363">
    <property type="entry name" value="S4"/>
    <property type="match status" value="1"/>
</dbReference>
<dbReference type="SUPFAM" id="SSF55174">
    <property type="entry name" value="Alpha-L RNA-binding motif"/>
    <property type="match status" value="1"/>
</dbReference>
<dbReference type="PROSITE" id="PS00632">
    <property type="entry name" value="RIBOSOMAL_S4"/>
    <property type="match status" value="1"/>
</dbReference>
<dbReference type="PROSITE" id="PS50889">
    <property type="entry name" value="S4"/>
    <property type="match status" value="1"/>
</dbReference>
<name>RS4_LEVBA</name>
<gene>
    <name evidence="1" type="primary">rpsD</name>
    <name type="ordered locus">LVIS_1259</name>
</gene>
<protein>
    <recommendedName>
        <fullName evidence="1">Small ribosomal subunit protein uS4</fullName>
    </recommendedName>
    <alternativeName>
        <fullName evidence="3">30S ribosomal protein S4</fullName>
    </alternativeName>
</protein>
<organism>
    <name type="scientific">Levilactobacillus brevis (strain ATCC 367 / BCRC 12310 / CIP 105137 / JCM 1170 / LMG 11437 / NCIMB 947 / NCTC 947)</name>
    <name type="common">Lactobacillus brevis</name>
    <dbReference type="NCBI Taxonomy" id="387344"/>
    <lineage>
        <taxon>Bacteria</taxon>
        <taxon>Bacillati</taxon>
        <taxon>Bacillota</taxon>
        <taxon>Bacilli</taxon>
        <taxon>Lactobacillales</taxon>
        <taxon>Lactobacillaceae</taxon>
        <taxon>Levilactobacillus</taxon>
    </lineage>
</organism>
<reference key="1">
    <citation type="journal article" date="2006" name="Proc. Natl. Acad. Sci. U.S.A.">
        <title>Comparative genomics of the lactic acid bacteria.</title>
        <authorList>
            <person name="Makarova K.S."/>
            <person name="Slesarev A."/>
            <person name="Wolf Y.I."/>
            <person name="Sorokin A."/>
            <person name="Mirkin B."/>
            <person name="Koonin E.V."/>
            <person name="Pavlov A."/>
            <person name="Pavlova N."/>
            <person name="Karamychev V."/>
            <person name="Polouchine N."/>
            <person name="Shakhova V."/>
            <person name="Grigoriev I."/>
            <person name="Lou Y."/>
            <person name="Rohksar D."/>
            <person name="Lucas S."/>
            <person name="Huang K."/>
            <person name="Goodstein D.M."/>
            <person name="Hawkins T."/>
            <person name="Plengvidhya V."/>
            <person name="Welker D."/>
            <person name="Hughes J."/>
            <person name="Goh Y."/>
            <person name="Benson A."/>
            <person name="Baldwin K."/>
            <person name="Lee J.-H."/>
            <person name="Diaz-Muniz I."/>
            <person name="Dosti B."/>
            <person name="Smeianov V."/>
            <person name="Wechter W."/>
            <person name="Barabote R."/>
            <person name="Lorca G."/>
            <person name="Altermann E."/>
            <person name="Barrangou R."/>
            <person name="Ganesan B."/>
            <person name="Xie Y."/>
            <person name="Rawsthorne H."/>
            <person name="Tamir D."/>
            <person name="Parker C."/>
            <person name="Breidt F."/>
            <person name="Broadbent J.R."/>
            <person name="Hutkins R."/>
            <person name="O'Sullivan D."/>
            <person name="Steele J."/>
            <person name="Unlu G."/>
            <person name="Saier M.H. Jr."/>
            <person name="Klaenhammer T."/>
            <person name="Richardson P."/>
            <person name="Kozyavkin S."/>
            <person name="Weimer B.C."/>
            <person name="Mills D.A."/>
        </authorList>
    </citation>
    <scope>NUCLEOTIDE SEQUENCE [LARGE SCALE GENOMIC DNA]</scope>
    <source>
        <strain>ATCC 367 / BCRC 12310 / CIP 105137 / JCM 1170 / LMG 11437 / NCIMB 947 / NCTC 947</strain>
    </source>
</reference>
<keyword id="KW-1185">Reference proteome</keyword>
<keyword id="KW-0687">Ribonucleoprotein</keyword>
<keyword id="KW-0689">Ribosomal protein</keyword>
<keyword id="KW-0694">RNA-binding</keyword>
<keyword id="KW-0699">rRNA-binding</keyword>
<comment type="function">
    <text evidence="1">One of the primary rRNA binding proteins, it binds directly to 16S rRNA where it nucleates assembly of the body of the 30S subunit.</text>
</comment>
<comment type="function">
    <text evidence="1">With S5 and S12 plays an important role in translational accuracy.</text>
</comment>
<comment type="subunit">
    <text evidence="1">Part of the 30S ribosomal subunit. Contacts protein S5. The interaction surface between S4 and S5 is involved in control of translational fidelity.</text>
</comment>
<comment type="similarity">
    <text evidence="1">Belongs to the universal ribosomal protein uS4 family.</text>
</comment>
<sequence>MSRYTGPSWRISRRLGVSLSGTGKELNRRPYAPGDHGQGRRQKLSEYGTQLREKQKLRFTYGMTERQFYNLFKRAGKIKEGTHGTNFMILLERRLDNMVYRLGLATTRRQARQLVNHGHITVDGQRVDIPSYEVKIGQVISVREKSKDMAIIKGAVEAVVGRPQYVEFDADKLAGSLTRFPQREELDAELDDSLIVEYYNR</sequence>
<evidence type="ECO:0000255" key="1">
    <source>
        <dbReference type="HAMAP-Rule" id="MF_01306"/>
    </source>
</evidence>
<evidence type="ECO:0000256" key="2">
    <source>
        <dbReference type="SAM" id="MobiDB-lite"/>
    </source>
</evidence>
<evidence type="ECO:0000305" key="3"/>